<protein>
    <recommendedName>
        <fullName>Tropomyosin</fullName>
    </recommendedName>
</protein>
<comment type="function">
    <text>Tropomyosin, in association with the troponin complex, plays a central role in the calcium dependent regulation of muscle contraction.</text>
</comment>
<comment type="subunit">
    <text evidence="1">Homodimer.</text>
</comment>
<comment type="domain">
    <text>The molecule is in a coiled coil structure that is formed by 2 polypeptide chains. The sequence exhibits a prominent seven-residues periodicity.</text>
</comment>
<comment type="similarity">
    <text evidence="2">Belongs to the tropomyosin family.</text>
</comment>
<accession>Q9NG56</accession>
<evidence type="ECO:0000250" key="1"/>
<evidence type="ECO:0000305" key="2"/>
<proteinExistence type="evidence at transcript level"/>
<dbReference type="EMBL" id="AF260897">
    <property type="protein sequence ID" value="AAF72534.1"/>
    <property type="molecule type" value="mRNA"/>
</dbReference>
<dbReference type="SMR" id="Q9NG56"/>
<dbReference type="Allergome" id="1182">
    <property type="allergen name" value="Bla g 7"/>
</dbReference>
<dbReference type="Allergome" id="3143">
    <property type="allergen name" value="Bla g 7.0101"/>
</dbReference>
<dbReference type="FunFam" id="1.20.5.170:FF:000005">
    <property type="entry name" value="Tropomyosin alpha-1 chain"/>
    <property type="match status" value="1"/>
</dbReference>
<dbReference type="FunFam" id="1.20.5.170:FF:000001">
    <property type="entry name" value="Tropomyosin alpha-1 chain isoform 1"/>
    <property type="match status" value="1"/>
</dbReference>
<dbReference type="FunFam" id="1.20.5.340:FF:000001">
    <property type="entry name" value="Tropomyosin alpha-1 chain isoform 2"/>
    <property type="match status" value="1"/>
</dbReference>
<dbReference type="Gene3D" id="1.20.5.170">
    <property type="match status" value="2"/>
</dbReference>
<dbReference type="Gene3D" id="1.20.5.340">
    <property type="match status" value="1"/>
</dbReference>
<dbReference type="InterPro" id="IPR000533">
    <property type="entry name" value="Tropomyosin"/>
</dbReference>
<dbReference type="PANTHER" id="PTHR19269">
    <property type="entry name" value="TROPOMYOSIN"/>
    <property type="match status" value="1"/>
</dbReference>
<dbReference type="Pfam" id="PF00261">
    <property type="entry name" value="Tropomyosin"/>
    <property type="match status" value="1"/>
</dbReference>
<dbReference type="PRINTS" id="PR00194">
    <property type="entry name" value="TROPOMYOSIN"/>
</dbReference>
<dbReference type="SUPFAM" id="SSF57997">
    <property type="entry name" value="Tropomyosin"/>
    <property type="match status" value="1"/>
</dbReference>
<dbReference type="PROSITE" id="PS00326">
    <property type="entry name" value="TROPOMYOSIN"/>
    <property type="match status" value="1"/>
</dbReference>
<keyword id="KW-0175">Coiled coil</keyword>
<keyword id="KW-0677">Repeat</keyword>
<reference key="1">
    <citation type="journal article" date="2004" name="Protein Expr. Purif.">
        <title>Expression of tropomyosin from Blattella germanica as a recombinant non-fusion protein in Pichia pastoris and comparison of its IgE reactivity with its native counterpart.</title>
        <authorList>
            <person name="Jeong K.Y."/>
            <person name="Lee J."/>
            <person name="Lee I.-Y."/>
            <person name="Hong C.-S."/>
            <person name="Ree H.-I."/>
            <person name="Yong T.-S."/>
        </authorList>
    </citation>
    <scope>NUCLEOTIDE SEQUENCE [MRNA]</scope>
    <source>
        <tissue>Gut</tissue>
    </source>
</reference>
<name>TPM_BLAGE</name>
<feature type="chain" id="PRO_0000205682" description="Tropomyosin">
    <location>
        <begin position="1"/>
        <end position="284"/>
    </location>
</feature>
<feature type="coiled-coil region" evidence="1">
    <location>
        <begin position="1"/>
        <end position="284"/>
    </location>
</feature>
<sequence>MDAIKKKMQAMKLEKDNAMDRALLCEQQARDANIRAEKAEEEARSLQKKIQQIENDLDQTMEQLMQVNAKLDEKDKALQNAESEVAALNRRIQLLEEDLERSEERLATATAKLAEASQAADESERARKILESKGLADEERMDALENQLKEARFMAEEADKKYDEVARKLAMVEADLERAEERAETGESKIVELEEELRVVGNNLKSLEVSEEKANLREEEYKQQIKTLNTRLKEAEARAEFAERSVQKLQKEVDRLEDELVHEKEKYKYICDDLDMTFTELIGN</sequence>
<organism>
    <name type="scientific">Blattella germanica</name>
    <name type="common">German cockroach</name>
    <name type="synonym">Blatta germanica</name>
    <dbReference type="NCBI Taxonomy" id="6973"/>
    <lineage>
        <taxon>Eukaryota</taxon>
        <taxon>Metazoa</taxon>
        <taxon>Ecdysozoa</taxon>
        <taxon>Arthropoda</taxon>
        <taxon>Hexapoda</taxon>
        <taxon>Insecta</taxon>
        <taxon>Pterygota</taxon>
        <taxon>Neoptera</taxon>
        <taxon>Polyneoptera</taxon>
        <taxon>Dictyoptera</taxon>
        <taxon>Blattodea</taxon>
        <taxon>Blaberoidea</taxon>
        <taxon>Blattellidae</taxon>
        <taxon>Blattella</taxon>
    </lineage>
</organism>